<reference key="1">
    <citation type="journal article" date="2002" name="Nature">
        <title>The genome sequence of Schizosaccharomyces pombe.</title>
        <authorList>
            <person name="Wood V."/>
            <person name="Gwilliam R."/>
            <person name="Rajandream M.A."/>
            <person name="Lyne M.H."/>
            <person name="Lyne R."/>
            <person name="Stewart A."/>
            <person name="Sgouros J.G."/>
            <person name="Peat N."/>
            <person name="Hayles J."/>
            <person name="Baker S.G."/>
            <person name="Basham D."/>
            <person name="Bowman S."/>
            <person name="Brooks K."/>
            <person name="Brown D."/>
            <person name="Brown S."/>
            <person name="Chillingworth T."/>
            <person name="Churcher C.M."/>
            <person name="Collins M."/>
            <person name="Connor R."/>
            <person name="Cronin A."/>
            <person name="Davis P."/>
            <person name="Feltwell T."/>
            <person name="Fraser A."/>
            <person name="Gentles S."/>
            <person name="Goble A."/>
            <person name="Hamlin N."/>
            <person name="Harris D.E."/>
            <person name="Hidalgo J."/>
            <person name="Hodgson G."/>
            <person name="Holroyd S."/>
            <person name="Hornsby T."/>
            <person name="Howarth S."/>
            <person name="Huckle E.J."/>
            <person name="Hunt S."/>
            <person name="Jagels K."/>
            <person name="James K.D."/>
            <person name="Jones L."/>
            <person name="Jones M."/>
            <person name="Leather S."/>
            <person name="McDonald S."/>
            <person name="McLean J."/>
            <person name="Mooney P."/>
            <person name="Moule S."/>
            <person name="Mungall K.L."/>
            <person name="Murphy L.D."/>
            <person name="Niblett D."/>
            <person name="Odell C."/>
            <person name="Oliver K."/>
            <person name="O'Neil S."/>
            <person name="Pearson D."/>
            <person name="Quail M.A."/>
            <person name="Rabbinowitsch E."/>
            <person name="Rutherford K.M."/>
            <person name="Rutter S."/>
            <person name="Saunders D."/>
            <person name="Seeger K."/>
            <person name="Sharp S."/>
            <person name="Skelton J."/>
            <person name="Simmonds M.N."/>
            <person name="Squares R."/>
            <person name="Squares S."/>
            <person name="Stevens K."/>
            <person name="Taylor K."/>
            <person name="Taylor R.G."/>
            <person name="Tivey A."/>
            <person name="Walsh S.V."/>
            <person name="Warren T."/>
            <person name="Whitehead S."/>
            <person name="Woodward J.R."/>
            <person name="Volckaert G."/>
            <person name="Aert R."/>
            <person name="Robben J."/>
            <person name="Grymonprez B."/>
            <person name="Weltjens I."/>
            <person name="Vanstreels E."/>
            <person name="Rieger M."/>
            <person name="Schaefer M."/>
            <person name="Mueller-Auer S."/>
            <person name="Gabel C."/>
            <person name="Fuchs M."/>
            <person name="Duesterhoeft A."/>
            <person name="Fritzc C."/>
            <person name="Holzer E."/>
            <person name="Moestl D."/>
            <person name="Hilbert H."/>
            <person name="Borzym K."/>
            <person name="Langer I."/>
            <person name="Beck A."/>
            <person name="Lehrach H."/>
            <person name="Reinhardt R."/>
            <person name="Pohl T.M."/>
            <person name="Eger P."/>
            <person name="Zimmermann W."/>
            <person name="Wedler H."/>
            <person name="Wambutt R."/>
            <person name="Purnelle B."/>
            <person name="Goffeau A."/>
            <person name="Cadieu E."/>
            <person name="Dreano S."/>
            <person name="Gloux S."/>
            <person name="Lelaure V."/>
            <person name="Mottier S."/>
            <person name="Galibert F."/>
            <person name="Aves S.J."/>
            <person name="Xiang Z."/>
            <person name="Hunt C."/>
            <person name="Moore K."/>
            <person name="Hurst S.M."/>
            <person name="Lucas M."/>
            <person name="Rochet M."/>
            <person name="Gaillardin C."/>
            <person name="Tallada V.A."/>
            <person name="Garzon A."/>
            <person name="Thode G."/>
            <person name="Daga R.R."/>
            <person name="Cruzado L."/>
            <person name="Jimenez J."/>
            <person name="Sanchez M."/>
            <person name="del Rey F."/>
            <person name="Benito J."/>
            <person name="Dominguez A."/>
            <person name="Revuelta J.L."/>
            <person name="Moreno S."/>
            <person name="Armstrong J."/>
            <person name="Forsburg S.L."/>
            <person name="Cerutti L."/>
            <person name="Lowe T."/>
            <person name="McCombie W.R."/>
            <person name="Paulsen I."/>
            <person name="Potashkin J."/>
            <person name="Shpakovski G.V."/>
            <person name="Ussery D."/>
            <person name="Barrell B.G."/>
            <person name="Nurse P."/>
        </authorList>
    </citation>
    <scope>NUCLEOTIDE SEQUENCE [LARGE SCALE GENOMIC DNA]</scope>
    <source>
        <strain>972 / ATCC 24843</strain>
    </source>
</reference>
<keyword id="KW-0378">Hydrolase</keyword>
<keyword id="KW-0645">Protease</keyword>
<keyword id="KW-1185">Reference proteome</keyword>
<keyword id="KW-0788">Thiol protease</keyword>
<keyword id="KW-0833">Ubl conjugation pathway</keyword>
<gene>
    <name type="primary">ubp1</name>
    <name type="ORF">SPCC16A11.12c</name>
</gene>
<name>UBP1_SCHPO</name>
<organism>
    <name type="scientific">Schizosaccharomyces pombe (strain 972 / ATCC 24843)</name>
    <name type="common">Fission yeast</name>
    <dbReference type="NCBI Taxonomy" id="284812"/>
    <lineage>
        <taxon>Eukaryota</taxon>
        <taxon>Fungi</taxon>
        <taxon>Dikarya</taxon>
        <taxon>Ascomycota</taxon>
        <taxon>Taphrinomycotina</taxon>
        <taxon>Schizosaccharomycetes</taxon>
        <taxon>Schizosaccharomycetales</taxon>
        <taxon>Schizosaccharomycetaceae</taxon>
        <taxon>Schizosaccharomyces</taxon>
    </lineage>
</organism>
<accession>Q9USM5</accession>
<protein>
    <recommendedName>
        <fullName>Probable ubiquitin carboxyl-terminal hydrolase 1</fullName>
        <ecNumber>3.4.19.12</ecNumber>
    </recommendedName>
    <alternativeName>
        <fullName>Deubiquitinating enzyme 1</fullName>
    </alternativeName>
    <alternativeName>
        <fullName>Ubiquitin thioesterase 1</fullName>
    </alternativeName>
    <alternativeName>
        <fullName>Ubiquitin-specific-processing protease 1</fullName>
    </alternativeName>
</protein>
<comment type="catalytic activity">
    <reaction>
        <text>Thiol-dependent hydrolysis of ester, thioester, amide, peptide and isopeptide bonds formed by the C-terminal Gly of ubiquitin (a 76-residue protein attached to proteins as an intracellular targeting signal).</text>
        <dbReference type="EC" id="3.4.19.12"/>
    </reaction>
</comment>
<comment type="similarity">
    <text evidence="4">Belongs to the peptidase C19 family.</text>
</comment>
<proteinExistence type="inferred from homology"/>
<evidence type="ECO:0000255" key="1">
    <source>
        <dbReference type="PROSITE-ProRule" id="PRU00613"/>
    </source>
</evidence>
<evidence type="ECO:0000255" key="2">
    <source>
        <dbReference type="PROSITE-ProRule" id="PRU10092"/>
    </source>
</evidence>
<evidence type="ECO:0000255" key="3">
    <source>
        <dbReference type="PROSITE-ProRule" id="PRU10093"/>
    </source>
</evidence>
<evidence type="ECO:0000305" key="4"/>
<dbReference type="EC" id="3.4.19.12"/>
<dbReference type="EMBL" id="CU329672">
    <property type="protein sequence ID" value="CAB53084.1"/>
    <property type="molecule type" value="Genomic_DNA"/>
</dbReference>
<dbReference type="PIR" id="T41085">
    <property type="entry name" value="T41085"/>
</dbReference>
<dbReference type="RefSeq" id="NP_587999.1">
    <property type="nucleotide sequence ID" value="NM_001022990.2"/>
</dbReference>
<dbReference type="SMR" id="Q9USM5"/>
<dbReference type="BioGRID" id="275798">
    <property type="interactions" value="1"/>
</dbReference>
<dbReference type="STRING" id="284812.Q9USM5"/>
<dbReference type="MEROPS" id="C19.A55"/>
<dbReference type="iPTMnet" id="Q9USM5"/>
<dbReference type="PaxDb" id="4896-SPCC16A11.12c.1"/>
<dbReference type="EnsemblFungi" id="SPCC16A11.12c.1">
    <property type="protein sequence ID" value="SPCC16A11.12c.1:pep"/>
    <property type="gene ID" value="SPCC16A11.12c"/>
</dbReference>
<dbReference type="GeneID" id="2539228"/>
<dbReference type="KEGG" id="spo:2539228"/>
<dbReference type="PomBase" id="SPCC16A11.12c">
    <property type="gene designation" value="ubp1"/>
</dbReference>
<dbReference type="VEuPathDB" id="FungiDB:SPCC16A11.12c"/>
<dbReference type="eggNOG" id="KOG1870">
    <property type="taxonomic scope" value="Eukaryota"/>
</dbReference>
<dbReference type="HOGENOM" id="CLU_001060_7_1_1"/>
<dbReference type="InParanoid" id="Q9USM5"/>
<dbReference type="OMA" id="KQQHSPN"/>
<dbReference type="PhylomeDB" id="Q9USM5"/>
<dbReference type="Reactome" id="R-SPO-5689880">
    <property type="pathway name" value="Ub-specific processing proteases"/>
</dbReference>
<dbReference type="PRO" id="PR:Q9USM5"/>
<dbReference type="Proteomes" id="UP000002485">
    <property type="component" value="Chromosome III"/>
</dbReference>
<dbReference type="GO" id="GO:0005783">
    <property type="term" value="C:endoplasmic reticulum"/>
    <property type="evidence" value="ECO:0007005"/>
    <property type="project" value="PomBase"/>
</dbReference>
<dbReference type="GO" id="GO:0004843">
    <property type="term" value="F:cysteine-type deubiquitinase activity"/>
    <property type="evidence" value="ECO:0007669"/>
    <property type="project" value="UniProtKB-EC"/>
</dbReference>
<dbReference type="GO" id="GO:0140492">
    <property type="term" value="F:metal-dependent deubiquitinase activity"/>
    <property type="evidence" value="ECO:0007005"/>
    <property type="project" value="PomBase"/>
</dbReference>
<dbReference type="GO" id="GO:0016579">
    <property type="term" value="P:protein deubiquitination"/>
    <property type="evidence" value="ECO:0007669"/>
    <property type="project" value="InterPro"/>
</dbReference>
<dbReference type="GO" id="GO:0006508">
    <property type="term" value="P:proteolysis"/>
    <property type="evidence" value="ECO:0007669"/>
    <property type="project" value="UniProtKB-KW"/>
</dbReference>
<dbReference type="CDD" id="cd02674">
    <property type="entry name" value="Peptidase_C19R"/>
    <property type="match status" value="1"/>
</dbReference>
<dbReference type="FunFam" id="3.90.70.10:FF:000537">
    <property type="entry name" value="Clan CA, family C19, ubiquitin hydrolase-like cysteine peptidase"/>
    <property type="match status" value="1"/>
</dbReference>
<dbReference type="Gene3D" id="3.90.70.10">
    <property type="entry name" value="Cysteine proteinases"/>
    <property type="match status" value="2"/>
</dbReference>
<dbReference type="Gene3D" id="3.30.2230.10">
    <property type="entry name" value="DUSP-like"/>
    <property type="match status" value="1"/>
</dbReference>
<dbReference type="Gene3D" id="3.10.20.90">
    <property type="entry name" value="Phosphatidylinositol 3-kinase Catalytic Subunit, Chain A, domain 1"/>
    <property type="match status" value="1"/>
</dbReference>
<dbReference type="InterPro" id="IPR035927">
    <property type="entry name" value="DUSP-like_sf"/>
</dbReference>
<dbReference type="InterPro" id="IPR038765">
    <property type="entry name" value="Papain-like_cys_pep_sf"/>
</dbReference>
<dbReference type="InterPro" id="IPR006615">
    <property type="entry name" value="Pept_C19_DUSP"/>
</dbReference>
<dbReference type="InterPro" id="IPR001394">
    <property type="entry name" value="Peptidase_C19_UCH"/>
</dbReference>
<dbReference type="InterPro" id="IPR050185">
    <property type="entry name" value="Ub_carboxyl-term_hydrolase"/>
</dbReference>
<dbReference type="InterPro" id="IPR018200">
    <property type="entry name" value="USP_CS"/>
</dbReference>
<dbReference type="InterPro" id="IPR028889">
    <property type="entry name" value="USP_dom"/>
</dbReference>
<dbReference type="PANTHER" id="PTHR21646">
    <property type="entry name" value="UBIQUITIN CARBOXYL-TERMINAL HYDROLASE"/>
    <property type="match status" value="1"/>
</dbReference>
<dbReference type="PANTHER" id="PTHR21646:SF97">
    <property type="entry name" value="UBIQUITIN CARBOXYL-TERMINAL HYDROLASE 1-RELATED"/>
    <property type="match status" value="1"/>
</dbReference>
<dbReference type="Pfam" id="PF06337">
    <property type="entry name" value="DUSP"/>
    <property type="match status" value="1"/>
</dbReference>
<dbReference type="Pfam" id="PF00443">
    <property type="entry name" value="UCH"/>
    <property type="match status" value="1"/>
</dbReference>
<dbReference type="SMART" id="SM00695">
    <property type="entry name" value="DUSP"/>
    <property type="match status" value="1"/>
</dbReference>
<dbReference type="SUPFAM" id="SSF54001">
    <property type="entry name" value="Cysteine proteinases"/>
    <property type="match status" value="1"/>
</dbReference>
<dbReference type="SUPFAM" id="SSF143791">
    <property type="entry name" value="DUSP-like"/>
    <property type="match status" value="1"/>
</dbReference>
<dbReference type="PROSITE" id="PS51283">
    <property type="entry name" value="DUSP"/>
    <property type="match status" value="1"/>
</dbReference>
<dbReference type="PROSITE" id="PS00972">
    <property type="entry name" value="USP_1"/>
    <property type="match status" value="1"/>
</dbReference>
<dbReference type="PROSITE" id="PS00973">
    <property type="entry name" value="USP_2"/>
    <property type="match status" value="1"/>
</dbReference>
<dbReference type="PROSITE" id="PS50235">
    <property type="entry name" value="USP_3"/>
    <property type="match status" value="1"/>
</dbReference>
<sequence>MASTATQNASTRYSQIWIDQPASLPFQDSINLIKEDKEKWKKEKTAFLIDYDWFEGYVDFIYGEGDNPGPITQWRLLDEKNELKHSLEESIDYSIVSASLWHMLVEWFGLEGLAIERKVLLVGLAAEQKPFVDIYPINFTLHVLFDPINGENTSYSPLYQIDEPYHSDEPYAFSFSRSDTLRSLYKQVMEAFQISDGTSFRLWYLNKSNLSSRFVSLSEFNDQPAIALLSEYAVCMTIFEIDIADGSLLLEFQHPNGEWLSDSITKEQNLTINKEIGLCGLYNLGNSCYMNSALQCMIHTHELTKYFLSDSYEKDINYNNPLGMMGKVALSYASLLKMIHHTADMHSVSPSSFKFIIGEFNTYFSGYRQQDSQEFIAFFLDGLHEDLNRIQIKPYFERPDLFDEHPLHVQRVANQCWDIHTKRNDSIIVQLFQGMYKSTLECSICYQKSTAFDPFMYLTLPLPTSAKWRHKVVYVPPFGTQSPVELYLELLMESTVIQMKFQATEKLQKMGLECGELTACDIYRGKVYKVLKNKDKISKKIHKWDHVVLYGSTANGLTIPIVHGCKRPAMPGSYQSNDVFGFPLQLNVRSRNVLTNDLVKEIVELYRVYAGIDVAIGTLQLGLKRMESKAGKWECIKEIEVKRFEIVEEEEIVIDDKTVIMCLWNDQQYEKLFYNCEWIFEKIQFHMESITLEDCLLEFSKPEQLDLQDSWYCPGCKAFRPATKRLEIWRLPKILVIHLNRFSGHGGDLRRRRKRRDLVVYPVFDLNLKQFLSPFIKDHEWLSSQKSMLYDLYAVDNHHGFMSNGHYTAYARDASSQTFFKFDDTAICEIDPEDIVTSSAYVLFYRAKN</sequence>
<feature type="chain" id="PRO_0000080602" description="Probable ubiquitin carboxyl-terminal hydrolase 1">
    <location>
        <begin position="1"/>
        <end position="849"/>
    </location>
</feature>
<feature type="domain" description="DUSP" evidence="1">
    <location>
        <begin position="20"/>
        <end position="120"/>
    </location>
</feature>
<feature type="domain" description="USP">
    <location>
        <begin position="279"/>
        <end position="848"/>
    </location>
</feature>
<feature type="active site" description="Nucleophile" evidence="2 3">
    <location>
        <position position="288"/>
    </location>
</feature>
<feature type="active site" description="Proton acceptor" evidence="2 3">
    <location>
        <position position="806"/>
    </location>
</feature>